<dbReference type="EMBL" id="CP000721">
    <property type="protein sequence ID" value="ABR35103.1"/>
    <property type="molecule type" value="Genomic_DNA"/>
</dbReference>
<dbReference type="RefSeq" id="WP_012059156.1">
    <property type="nucleotide sequence ID" value="NC_009617.1"/>
</dbReference>
<dbReference type="KEGG" id="cbe:Cbei_2962"/>
<dbReference type="eggNOG" id="COG1342">
    <property type="taxonomic scope" value="Bacteria"/>
</dbReference>
<dbReference type="HOGENOM" id="CLU_094511_0_1_9"/>
<dbReference type="Proteomes" id="UP000000565">
    <property type="component" value="Chromosome"/>
</dbReference>
<dbReference type="HAMAP" id="MF_00674">
    <property type="entry name" value="UPF0251"/>
    <property type="match status" value="1"/>
</dbReference>
<dbReference type="InterPro" id="IPR013324">
    <property type="entry name" value="RNA_pol_sigma_r3/r4-like"/>
</dbReference>
<dbReference type="InterPro" id="IPR002852">
    <property type="entry name" value="UPF0251"/>
</dbReference>
<dbReference type="PANTHER" id="PTHR37478">
    <property type="match status" value="1"/>
</dbReference>
<dbReference type="PANTHER" id="PTHR37478:SF2">
    <property type="entry name" value="UPF0251 PROTEIN TK0562"/>
    <property type="match status" value="1"/>
</dbReference>
<dbReference type="Pfam" id="PF02001">
    <property type="entry name" value="DUF134"/>
    <property type="match status" value="1"/>
</dbReference>
<dbReference type="SUPFAM" id="SSF88659">
    <property type="entry name" value="Sigma3 and sigma4 domains of RNA polymerase sigma factors"/>
    <property type="match status" value="1"/>
</dbReference>
<comment type="similarity">
    <text evidence="1">Belongs to the UPF0251 family.</text>
</comment>
<feature type="chain" id="PRO_1000082952" description="UPF0251 protein Cbei_2962">
    <location>
        <begin position="1"/>
        <end position="148"/>
    </location>
</feature>
<sequence length="148" mass="17023">MARPTKFRRVEFFPEDDYFVPCGKPKCQIEEIALKVEELEAMRLKDIEELNQEECAEKMQVSRQTFQNIIDSARKKVVTALTEGKAIRISGGHYTTKLCKFKCAECETIYEINYDQDRAVCPSCGSDKVMCNKKAGFCKNWCKGNNIE</sequence>
<evidence type="ECO:0000255" key="1">
    <source>
        <dbReference type="HAMAP-Rule" id="MF_00674"/>
    </source>
</evidence>
<organism>
    <name type="scientific">Clostridium beijerinckii (strain ATCC 51743 / NCIMB 8052)</name>
    <name type="common">Clostridium acetobutylicum</name>
    <dbReference type="NCBI Taxonomy" id="290402"/>
    <lineage>
        <taxon>Bacteria</taxon>
        <taxon>Bacillati</taxon>
        <taxon>Bacillota</taxon>
        <taxon>Clostridia</taxon>
        <taxon>Eubacteriales</taxon>
        <taxon>Clostridiaceae</taxon>
        <taxon>Clostridium</taxon>
    </lineage>
</organism>
<name>Y2962_CLOB8</name>
<gene>
    <name type="ordered locus">Cbei_2962</name>
</gene>
<protein>
    <recommendedName>
        <fullName evidence="1">UPF0251 protein Cbei_2962</fullName>
    </recommendedName>
</protein>
<reference key="1">
    <citation type="submission" date="2007-06" db="EMBL/GenBank/DDBJ databases">
        <title>Complete sequence of Clostridium beijerinckii NCIMB 8052.</title>
        <authorList>
            <consortium name="US DOE Joint Genome Institute"/>
            <person name="Copeland A."/>
            <person name="Lucas S."/>
            <person name="Lapidus A."/>
            <person name="Barry K."/>
            <person name="Detter J.C."/>
            <person name="Glavina del Rio T."/>
            <person name="Hammon N."/>
            <person name="Israni S."/>
            <person name="Dalin E."/>
            <person name="Tice H."/>
            <person name="Pitluck S."/>
            <person name="Sims D."/>
            <person name="Brettin T."/>
            <person name="Bruce D."/>
            <person name="Tapia R."/>
            <person name="Brainard J."/>
            <person name="Schmutz J."/>
            <person name="Larimer F."/>
            <person name="Land M."/>
            <person name="Hauser L."/>
            <person name="Kyrpides N."/>
            <person name="Mikhailova N."/>
            <person name="Bennet G."/>
            <person name="Cann I."/>
            <person name="Chen J.-S."/>
            <person name="Contreras A.L."/>
            <person name="Jones D."/>
            <person name="Kashket E."/>
            <person name="Mitchell W."/>
            <person name="Stoddard S."/>
            <person name="Schwarz W."/>
            <person name="Qureshi N."/>
            <person name="Young M."/>
            <person name="Shi Z."/>
            <person name="Ezeji T."/>
            <person name="White B."/>
            <person name="Blaschek H."/>
            <person name="Richardson P."/>
        </authorList>
    </citation>
    <scope>NUCLEOTIDE SEQUENCE [LARGE SCALE GENOMIC DNA]</scope>
    <source>
        <strain>ATCC 51743 / NCIMB 8052</strain>
    </source>
</reference>
<proteinExistence type="inferred from homology"/>
<accession>A6LXM3</accession>